<organism>
    <name type="scientific">Burkholderia lata (strain ATCC 17760 / DSM 23089 / LMG 22485 / NCIMB 9086 / R18194 / 383)</name>
    <dbReference type="NCBI Taxonomy" id="482957"/>
    <lineage>
        <taxon>Bacteria</taxon>
        <taxon>Pseudomonadati</taxon>
        <taxon>Pseudomonadota</taxon>
        <taxon>Betaproteobacteria</taxon>
        <taxon>Burkholderiales</taxon>
        <taxon>Burkholderiaceae</taxon>
        <taxon>Burkholderia</taxon>
        <taxon>Burkholderia cepacia complex</taxon>
    </lineage>
</organism>
<reference key="1">
    <citation type="submission" date="2005-10" db="EMBL/GenBank/DDBJ databases">
        <title>Complete sequence of chromosome 1 of Burkholderia sp. 383.</title>
        <authorList>
            <consortium name="US DOE Joint Genome Institute"/>
            <person name="Copeland A."/>
            <person name="Lucas S."/>
            <person name="Lapidus A."/>
            <person name="Barry K."/>
            <person name="Detter J.C."/>
            <person name="Glavina T."/>
            <person name="Hammon N."/>
            <person name="Israni S."/>
            <person name="Pitluck S."/>
            <person name="Chain P."/>
            <person name="Malfatti S."/>
            <person name="Shin M."/>
            <person name="Vergez L."/>
            <person name="Schmutz J."/>
            <person name="Larimer F."/>
            <person name="Land M."/>
            <person name="Kyrpides N."/>
            <person name="Lykidis A."/>
            <person name="Richardson P."/>
        </authorList>
    </citation>
    <scope>NUCLEOTIDE SEQUENCE [LARGE SCALE GENOMIC DNA]</scope>
    <source>
        <strain>ATCC 17760 / DSM 23089 / LMG 22485 / NCIMB 9086 / R18194 / 383</strain>
    </source>
</reference>
<sequence>MPSFDVVSEANMIEVKNAIEQSNKEISTRFDFKGSDARVEQKERELTLFADDDFKLGQVKDVLIGKLAKRNVDVRFLDYGKVEKIGGDKLKQIVTVKKGVTGDLAKKIVRLVKDSKIKVQASIQGDAVRVNGTKRDDLQSVIAMLRKDVTDTPLDFNNFRD</sequence>
<gene>
    <name type="ordered locus">Bcep18194_A5887</name>
</gene>
<proteinExistence type="inferred from homology"/>
<accession>Q39DI5</accession>
<comment type="function">
    <text evidence="1">Nucleotide-binding protein.</text>
</comment>
<comment type="similarity">
    <text evidence="1">Belongs to the YajQ family.</text>
</comment>
<feature type="chain" id="PRO_0000261925" description="Nucleotide-binding protein Bcep18194_A5887">
    <location>
        <begin position="1"/>
        <end position="161"/>
    </location>
</feature>
<dbReference type="EMBL" id="CP000151">
    <property type="protein sequence ID" value="ABB09481.1"/>
    <property type="molecule type" value="Genomic_DNA"/>
</dbReference>
<dbReference type="RefSeq" id="WP_011352998.1">
    <property type="nucleotide sequence ID" value="NC_007510.1"/>
</dbReference>
<dbReference type="SMR" id="Q39DI5"/>
<dbReference type="GeneID" id="45095770"/>
<dbReference type="KEGG" id="bur:Bcep18194_A5887"/>
<dbReference type="PATRIC" id="fig|482957.22.peg.2878"/>
<dbReference type="HOGENOM" id="CLU_099839_1_0_4"/>
<dbReference type="Proteomes" id="UP000002705">
    <property type="component" value="Chromosome 1"/>
</dbReference>
<dbReference type="GO" id="GO:0005829">
    <property type="term" value="C:cytosol"/>
    <property type="evidence" value="ECO:0007669"/>
    <property type="project" value="TreeGrafter"/>
</dbReference>
<dbReference type="GO" id="GO:0000166">
    <property type="term" value="F:nucleotide binding"/>
    <property type="evidence" value="ECO:0007669"/>
    <property type="project" value="TreeGrafter"/>
</dbReference>
<dbReference type="CDD" id="cd11740">
    <property type="entry name" value="YajQ_like"/>
    <property type="match status" value="1"/>
</dbReference>
<dbReference type="Gene3D" id="3.30.70.860">
    <property type="match status" value="1"/>
</dbReference>
<dbReference type="Gene3D" id="3.30.70.990">
    <property type="entry name" value="YajQ-like, domain 2"/>
    <property type="match status" value="1"/>
</dbReference>
<dbReference type="HAMAP" id="MF_00632">
    <property type="entry name" value="YajQ"/>
    <property type="match status" value="1"/>
</dbReference>
<dbReference type="InterPro" id="IPR007551">
    <property type="entry name" value="DUF520"/>
</dbReference>
<dbReference type="InterPro" id="IPR035571">
    <property type="entry name" value="UPF0234-like_C"/>
</dbReference>
<dbReference type="InterPro" id="IPR035570">
    <property type="entry name" value="UPF0234_N"/>
</dbReference>
<dbReference type="InterPro" id="IPR036183">
    <property type="entry name" value="YajQ-like_sf"/>
</dbReference>
<dbReference type="NCBIfam" id="NF003819">
    <property type="entry name" value="PRK05412.1"/>
    <property type="match status" value="1"/>
</dbReference>
<dbReference type="PANTHER" id="PTHR30476">
    <property type="entry name" value="UPF0234 PROTEIN YAJQ"/>
    <property type="match status" value="1"/>
</dbReference>
<dbReference type="PANTHER" id="PTHR30476:SF0">
    <property type="entry name" value="UPF0234 PROTEIN YAJQ"/>
    <property type="match status" value="1"/>
</dbReference>
<dbReference type="Pfam" id="PF04461">
    <property type="entry name" value="DUF520"/>
    <property type="match status" value="1"/>
</dbReference>
<dbReference type="SUPFAM" id="SSF89963">
    <property type="entry name" value="YajQ-like"/>
    <property type="match status" value="2"/>
</dbReference>
<name>Y5887_BURL3</name>
<protein>
    <recommendedName>
        <fullName evidence="1">Nucleotide-binding protein Bcep18194_A5887</fullName>
    </recommendedName>
</protein>
<keyword id="KW-0547">Nucleotide-binding</keyword>
<evidence type="ECO:0000255" key="1">
    <source>
        <dbReference type="HAMAP-Rule" id="MF_00632"/>
    </source>
</evidence>